<accession>B5FYY5</accession>
<evidence type="ECO:0000250" key="1"/>
<evidence type="ECO:0000250" key="2">
    <source>
        <dbReference type="UniProtKB" id="Q9JHS3"/>
    </source>
</evidence>
<evidence type="ECO:0000250" key="3">
    <source>
        <dbReference type="UniProtKB" id="Q9Y2Q5"/>
    </source>
</evidence>
<evidence type="ECO:0000305" key="4"/>
<name>LTOR2_TAEGU</name>
<proteinExistence type="evidence at transcript level"/>
<organism>
    <name type="scientific">Taeniopygia guttata</name>
    <name type="common">Zebra finch</name>
    <name type="synonym">Poephila guttata</name>
    <dbReference type="NCBI Taxonomy" id="59729"/>
    <lineage>
        <taxon>Eukaryota</taxon>
        <taxon>Metazoa</taxon>
        <taxon>Chordata</taxon>
        <taxon>Craniata</taxon>
        <taxon>Vertebrata</taxon>
        <taxon>Euteleostomi</taxon>
        <taxon>Archelosauria</taxon>
        <taxon>Archosauria</taxon>
        <taxon>Dinosauria</taxon>
        <taxon>Saurischia</taxon>
        <taxon>Theropoda</taxon>
        <taxon>Coelurosauria</taxon>
        <taxon>Aves</taxon>
        <taxon>Neognathae</taxon>
        <taxon>Neoaves</taxon>
        <taxon>Telluraves</taxon>
        <taxon>Australaves</taxon>
        <taxon>Passeriformes</taxon>
        <taxon>Passeroidea</taxon>
        <taxon>Estrildidae</taxon>
        <taxon>Estrildinae</taxon>
        <taxon>Taeniopygia</taxon>
    </lineage>
</organism>
<reference key="1">
    <citation type="journal article" date="2006" name="Proc. Natl. Acad. Sci. U.S.A.">
        <title>A molecular neuroethological approach for identifying and characterizing a cascade of behaviorally regulated genes.</title>
        <authorList>
            <person name="Wada K."/>
            <person name="Howard J.T."/>
            <person name="McConnell P."/>
            <person name="Whitney O."/>
            <person name="Lints T."/>
            <person name="Rivas M.V."/>
            <person name="Horita H."/>
            <person name="Patterson M.A."/>
            <person name="White S.A."/>
            <person name="Scharff C."/>
            <person name="Haesler S."/>
            <person name="Zhao S."/>
            <person name="Sakaguchi H."/>
            <person name="Hagiwara M."/>
            <person name="Shiraki T."/>
            <person name="Hirozane-Kishikawa T."/>
            <person name="Skene P."/>
            <person name="Hayashizaki Y."/>
            <person name="Carninci P."/>
            <person name="Jarvis E.D."/>
        </authorList>
    </citation>
    <scope>NUCLEOTIDE SEQUENCE [LARGE SCALE MRNA]</scope>
    <source>
        <tissue>Brain</tissue>
    </source>
</reference>
<gene>
    <name type="primary">LAMTOR2</name>
</gene>
<comment type="function">
    <text evidence="3">As part of the Ragulator complex it is involved in amino acid sensing and activation of mTORC1, a signaling complex promoting cell growth in response to growth factors, energy levels, and amino acids. Activated by amino acids through a mechanism involving the lysosomal V-ATPase, the Ragulator plays a dual role for the small GTPases Rag (RagA/RRAGA, RagB/RRAGB, RagC/RRAGC and/or RagD/RRAGD): it (1) acts as a guanine nucleotide exchange factor (GEF), activating the small GTPases Rag and (2) mediates recruitment of Rag GTPases to the lysosome membrane. Activated Ragulator and Rag GTPases function as a scaffold recruiting mTORC1 to lysosomes where it is in turn activated.</text>
</comment>
<comment type="subunit">
    <text evidence="3">Part of the Ragulator complex composed of lamtor1, lamtor2, lamtor3, lamtor4 and lamtor5. The Ragulator complex interacts with slc38a9; the probable amino acid sensor. Component of the lysosomal folliculin complex (LFC).</text>
</comment>
<comment type="subcellular location">
    <subcellularLocation>
        <location evidence="2">Late endosome membrane</location>
        <topology evidence="2">Peripheral membrane protein</topology>
        <orientation evidence="2">Cytoplasmic side</orientation>
    </subcellularLocation>
    <subcellularLocation>
        <location evidence="2">Lysosome membrane</location>
        <topology evidence="2">Peripheral membrane protein</topology>
        <orientation evidence="2">Cytoplasmic side</orientation>
    </subcellularLocation>
    <text evidence="2">Recruited to lysosome and endosome membranes by LAMTOR1.</text>
</comment>
<comment type="similarity">
    <text evidence="4">Belongs to the GAMAD family.</text>
</comment>
<feature type="chain" id="PRO_0000365940" description="Ragulator complex protein LAMTOR2">
    <location>
        <begin position="1"/>
        <end position="125"/>
    </location>
</feature>
<feature type="region of interest" description="Required for location at endosomes" evidence="1">
    <location>
        <begin position="57"/>
        <end position="70"/>
    </location>
</feature>
<sequence>MLRPKALTQVLSQANTGGVQSTLLLNNEGSLLAYSGYGDTDARVTAAIASNIWVAYDKNGHQAFNEDNLKFILMDCMEGRVAITRVANLLLCMYAKETVGFGMLKAKAQALVQYLEEPLTQVAAS</sequence>
<dbReference type="EMBL" id="DQ214220">
    <property type="protein sequence ID" value="ACH44246.1"/>
    <property type="molecule type" value="mRNA"/>
</dbReference>
<dbReference type="EMBL" id="DQ214221">
    <property type="protein sequence ID" value="ACH44247.1"/>
    <property type="molecule type" value="mRNA"/>
</dbReference>
<dbReference type="RefSeq" id="NP_001232058.1">
    <property type="nucleotide sequence ID" value="NM_001245129.1"/>
</dbReference>
<dbReference type="SMR" id="B5FYY5"/>
<dbReference type="STRING" id="59729.ENSTGUP00000003776"/>
<dbReference type="Ensembl" id="ENSTGUT00000003818.2">
    <property type="protein sequence ID" value="ENSTGUP00000003776.2"/>
    <property type="gene ID" value="ENSTGUG00000003670.2"/>
</dbReference>
<dbReference type="GeneID" id="100190214"/>
<dbReference type="KEGG" id="tgu:100190214"/>
<dbReference type="CTD" id="28956"/>
<dbReference type="GeneTree" id="ENSGT00390000006100"/>
<dbReference type="InParanoid" id="B5FYY5"/>
<dbReference type="OMA" id="WAAYEKN"/>
<dbReference type="OrthoDB" id="271745at2759"/>
<dbReference type="Proteomes" id="UP000007754">
    <property type="component" value="Chromosome 25"/>
</dbReference>
<dbReference type="GO" id="GO:1990877">
    <property type="term" value="C:FNIP-folliculin RagC/D GAP"/>
    <property type="evidence" value="ECO:0007669"/>
    <property type="project" value="Ensembl"/>
</dbReference>
<dbReference type="GO" id="GO:0005770">
    <property type="term" value="C:late endosome"/>
    <property type="evidence" value="ECO:0000250"/>
    <property type="project" value="UniProtKB"/>
</dbReference>
<dbReference type="GO" id="GO:0031902">
    <property type="term" value="C:late endosome membrane"/>
    <property type="evidence" value="ECO:0007669"/>
    <property type="project" value="UniProtKB-SubCell"/>
</dbReference>
<dbReference type="GO" id="GO:0005765">
    <property type="term" value="C:lysosomal membrane"/>
    <property type="evidence" value="ECO:0000250"/>
    <property type="project" value="UniProtKB"/>
</dbReference>
<dbReference type="GO" id="GO:0071986">
    <property type="term" value="C:Ragulator complex"/>
    <property type="evidence" value="ECO:0000250"/>
    <property type="project" value="UniProtKB"/>
</dbReference>
<dbReference type="GO" id="GO:0005085">
    <property type="term" value="F:guanyl-nucleotide exchange factor activity"/>
    <property type="evidence" value="ECO:0007669"/>
    <property type="project" value="Ensembl"/>
</dbReference>
<dbReference type="GO" id="GO:0060090">
    <property type="term" value="F:molecular adaptor activity"/>
    <property type="evidence" value="ECO:0007669"/>
    <property type="project" value="Ensembl"/>
</dbReference>
<dbReference type="GO" id="GO:0071230">
    <property type="term" value="P:cellular response to amino acid stimulus"/>
    <property type="evidence" value="ECO:0000250"/>
    <property type="project" value="UniProtKB"/>
</dbReference>
<dbReference type="GO" id="GO:0010761">
    <property type="term" value="P:fibroblast migration"/>
    <property type="evidence" value="ECO:0007669"/>
    <property type="project" value="Ensembl"/>
</dbReference>
<dbReference type="GO" id="GO:0043410">
    <property type="term" value="P:positive regulation of MAPK cascade"/>
    <property type="evidence" value="ECO:0007669"/>
    <property type="project" value="Ensembl"/>
</dbReference>
<dbReference type="GO" id="GO:0032008">
    <property type="term" value="P:positive regulation of TOR signaling"/>
    <property type="evidence" value="ECO:0000250"/>
    <property type="project" value="UniProtKB"/>
</dbReference>
<dbReference type="GO" id="GO:1904263">
    <property type="term" value="P:positive regulation of TORC1 signaling"/>
    <property type="evidence" value="ECO:0000250"/>
    <property type="project" value="UniProtKB"/>
</dbReference>
<dbReference type="GO" id="GO:0008104">
    <property type="term" value="P:protein localization"/>
    <property type="evidence" value="ECO:0000250"/>
    <property type="project" value="UniProtKB"/>
</dbReference>
<dbReference type="GO" id="GO:1902414">
    <property type="term" value="P:protein localization to cell junction"/>
    <property type="evidence" value="ECO:0007669"/>
    <property type="project" value="Ensembl"/>
</dbReference>
<dbReference type="GO" id="GO:0001558">
    <property type="term" value="P:regulation of cell growth"/>
    <property type="evidence" value="ECO:0000250"/>
    <property type="project" value="UniProtKB"/>
</dbReference>
<dbReference type="GO" id="GO:0150116">
    <property type="term" value="P:regulation of cell-substrate junction organization"/>
    <property type="evidence" value="ECO:0007669"/>
    <property type="project" value="Ensembl"/>
</dbReference>
<dbReference type="FunFam" id="3.30.450.30:FF:000004">
    <property type="entry name" value="ragulator complex protein LAMTOR2"/>
    <property type="match status" value="1"/>
</dbReference>
<dbReference type="Gene3D" id="3.30.450.30">
    <property type="entry name" value="Dynein light chain 2a, cytoplasmic"/>
    <property type="match status" value="1"/>
</dbReference>
<dbReference type="InterPro" id="IPR037587">
    <property type="entry name" value="LAMTOR2-like"/>
</dbReference>
<dbReference type="InterPro" id="IPR004942">
    <property type="entry name" value="Roadblock/LAMTOR2_dom"/>
</dbReference>
<dbReference type="PANTHER" id="PTHR13323">
    <property type="entry name" value="LATE ENDOSOMAL/LYSOSOMAL MP1 INTERACTING PROTEIN"/>
    <property type="match status" value="1"/>
</dbReference>
<dbReference type="Pfam" id="PF03259">
    <property type="entry name" value="Robl_LC7"/>
    <property type="match status" value="1"/>
</dbReference>
<dbReference type="SMART" id="SM00960">
    <property type="entry name" value="Robl_LC7"/>
    <property type="match status" value="1"/>
</dbReference>
<dbReference type="SUPFAM" id="SSF103196">
    <property type="entry name" value="Roadblock/LC7 domain"/>
    <property type="match status" value="1"/>
</dbReference>
<protein>
    <recommendedName>
        <fullName>Ragulator complex protein LAMTOR2</fullName>
    </recommendedName>
    <alternativeName>
        <fullName>Late endosomal/lysosomal adaptor and MAPK and MTOR activator 2</fullName>
    </alternativeName>
</protein>
<keyword id="KW-0967">Endosome</keyword>
<keyword id="KW-0458">Lysosome</keyword>
<keyword id="KW-0472">Membrane</keyword>
<keyword id="KW-1185">Reference proteome</keyword>